<feature type="chain" id="PRO_0000184072" description="Endo-1,4-beta-xylanase">
    <location>
        <begin position="1"/>
        <end position="190"/>
    </location>
</feature>
<feature type="domain" description="GH11" evidence="1">
    <location>
        <begin position="1"/>
        <end position="190"/>
    </location>
</feature>
<feature type="active site" description="Nucleophile">
    <location>
        <position position="86"/>
    </location>
</feature>
<feature type="active site" description="Proton donor">
    <location>
        <position position="177"/>
    </location>
</feature>
<feature type="strand" evidence="3">
    <location>
        <begin position="5"/>
        <end position="12"/>
    </location>
</feature>
<feature type="strand" evidence="3">
    <location>
        <begin position="14"/>
        <end position="19"/>
    </location>
</feature>
<feature type="strand" evidence="3">
    <location>
        <begin position="25"/>
        <end position="29"/>
    </location>
</feature>
<feature type="strand" evidence="3">
    <location>
        <begin position="34"/>
        <end position="41"/>
    </location>
</feature>
<feature type="strand" evidence="3">
    <location>
        <begin position="44"/>
        <end position="53"/>
    </location>
</feature>
<feature type="strand" evidence="3">
    <location>
        <begin position="59"/>
        <end position="81"/>
    </location>
</feature>
<feature type="turn" evidence="3">
    <location>
        <begin position="82"/>
        <end position="84"/>
    </location>
</feature>
<feature type="strand" evidence="3">
    <location>
        <begin position="85"/>
        <end position="93"/>
    </location>
</feature>
<feature type="turn" evidence="3">
    <location>
        <begin position="98"/>
        <end position="101"/>
    </location>
</feature>
<feature type="strand" evidence="3">
    <location>
        <begin position="103"/>
        <end position="110"/>
    </location>
</feature>
<feature type="strand" evidence="3">
    <location>
        <begin position="113"/>
        <end position="125"/>
    </location>
</feature>
<feature type="strand" evidence="3">
    <location>
        <begin position="130"/>
        <end position="143"/>
    </location>
</feature>
<feature type="strand" evidence="3">
    <location>
        <begin position="146"/>
        <end position="151"/>
    </location>
</feature>
<feature type="helix" evidence="3">
    <location>
        <begin position="152"/>
        <end position="161"/>
    </location>
</feature>
<feature type="strand" evidence="3">
    <location>
        <begin position="168"/>
        <end position="180"/>
    </location>
</feature>
<feature type="strand" evidence="3">
    <location>
        <begin position="182"/>
        <end position="189"/>
    </location>
</feature>
<comment type="catalytic activity">
    <reaction>
        <text>Endohydrolysis of (1-&gt;4)-beta-D-xylosidic linkages in xylans.</text>
        <dbReference type="EC" id="3.2.1.8"/>
    </reaction>
</comment>
<comment type="pathway">
    <text>Glycan degradation; xylan degradation.</text>
</comment>
<comment type="similarity">
    <text evidence="2">Belongs to the glycosyl hydrolase 11 (cellulase G) family.</text>
</comment>
<reference key="1">
    <citation type="book" date="1992" name="Xylans and xylanases">
        <title>The amino acid sequence of the 20 Kd xylanase from Trichoderma harzianum E58.</title>
        <editorList>
            <person name="Visser J."/>
            <person name="Beldman G."/>
            <person name="Kusters-van Someren M.A."/>
            <person name="Voragen A.G.J."/>
        </editorList>
        <authorList>
            <person name="Yaguchi M."/>
            <person name="Roy C."/>
            <person name="Watson D.C."/>
            <person name="Rollin F."/>
            <person name="Tan L.U.L."/>
            <person name="Senior D.J."/>
            <person name="Saddler J.N."/>
        </authorList>
    </citation>
    <scope>PROTEIN SEQUENCE</scope>
    <source>
        <strain>E58</strain>
    </source>
</reference>
<reference key="2">
    <citation type="book" date="1993" name="Trichoderma reesei cellulases and other hydrolases">
        <title>High-resolution structures of xylanases from B.circulans and T.harzianum identify a new folding pattern and implications for the atomic basis of the catalysis.</title>
        <editorList>
            <person name="Suominen P."/>
            <person name="Reinikainen T."/>
        </editorList>
        <authorList>
            <person name="Campbell R.L."/>
            <person name="Rose D.R."/>
            <person name="Wakarchuk W.W."/>
            <person name="To R.J."/>
            <person name="Sung W."/>
            <person name="Yaguchi M."/>
        </authorList>
    </citation>
    <scope>X-RAY CRYSTALLOGRAPHY (1.8 ANGSTROMS)</scope>
</reference>
<evidence type="ECO:0000255" key="1">
    <source>
        <dbReference type="PROSITE-ProRule" id="PRU01097"/>
    </source>
</evidence>
<evidence type="ECO:0000305" key="2"/>
<evidence type="ECO:0007829" key="3">
    <source>
        <dbReference type="PDB" id="1XND"/>
    </source>
</evidence>
<proteinExistence type="evidence at protein level"/>
<protein>
    <recommendedName>
        <fullName>Endo-1,4-beta-xylanase</fullName>
        <shortName>Xylanase</shortName>
        <ecNumber>3.2.1.8</ecNumber>
    </recommendedName>
    <alternativeName>
        <fullName>1,4-beta-D-xylan xylanohydrolase</fullName>
    </alternativeName>
</protein>
<dbReference type="EC" id="3.2.1.8"/>
<dbReference type="PIR" id="A44593">
    <property type="entry name" value="A44593"/>
</dbReference>
<dbReference type="PDB" id="1XND">
    <property type="method" value="X-ray"/>
    <property type="resolution" value="2.00 A"/>
    <property type="chains" value="A=1-190"/>
</dbReference>
<dbReference type="PDBsum" id="1XND"/>
<dbReference type="SMR" id="P48793"/>
<dbReference type="CAZy" id="GH11">
    <property type="family name" value="Glycoside Hydrolase Family 11"/>
</dbReference>
<dbReference type="UniPathway" id="UPA00114"/>
<dbReference type="EvolutionaryTrace" id="P48793"/>
<dbReference type="GO" id="GO:0031176">
    <property type="term" value="F:endo-1,4-beta-xylanase activity"/>
    <property type="evidence" value="ECO:0007669"/>
    <property type="project" value="UniProtKB-EC"/>
</dbReference>
<dbReference type="GO" id="GO:0045493">
    <property type="term" value="P:xylan catabolic process"/>
    <property type="evidence" value="ECO:0007669"/>
    <property type="project" value="UniProtKB-UniPathway"/>
</dbReference>
<dbReference type="FunFam" id="2.60.120.180:FF:000001">
    <property type="entry name" value="Endo-1,4-beta-xylanase"/>
    <property type="match status" value="1"/>
</dbReference>
<dbReference type="Gene3D" id="2.60.120.180">
    <property type="match status" value="1"/>
</dbReference>
<dbReference type="InterPro" id="IPR013320">
    <property type="entry name" value="ConA-like_dom_sf"/>
</dbReference>
<dbReference type="InterPro" id="IPR013319">
    <property type="entry name" value="GH11/12"/>
</dbReference>
<dbReference type="InterPro" id="IPR018208">
    <property type="entry name" value="GH11_AS_1"/>
</dbReference>
<dbReference type="InterPro" id="IPR033119">
    <property type="entry name" value="GH11_AS_2"/>
</dbReference>
<dbReference type="InterPro" id="IPR033123">
    <property type="entry name" value="GH11_dom"/>
</dbReference>
<dbReference type="InterPro" id="IPR001137">
    <property type="entry name" value="Glyco_hydro_11"/>
</dbReference>
<dbReference type="PANTHER" id="PTHR46828:SF3">
    <property type="entry name" value="ENDO-1,4-BETA-XYLANASE"/>
    <property type="match status" value="1"/>
</dbReference>
<dbReference type="PANTHER" id="PTHR46828">
    <property type="entry name" value="ENDO-1,4-BETA-XYLANASE A-RELATED"/>
    <property type="match status" value="1"/>
</dbReference>
<dbReference type="Pfam" id="PF00457">
    <property type="entry name" value="Glyco_hydro_11"/>
    <property type="match status" value="1"/>
</dbReference>
<dbReference type="PRINTS" id="PR00911">
    <property type="entry name" value="GLHYDRLASE11"/>
</dbReference>
<dbReference type="SUPFAM" id="SSF49899">
    <property type="entry name" value="Concanavalin A-like lectins/glucanases"/>
    <property type="match status" value="1"/>
</dbReference>
<dbReference type="PROSITE" id="PS00776">
    <property type="entry name" value="GH11_1"/>
    <property type="match status" value="1"/>
</dbReference>
<dbReference type="PROSITE" id="PS00777">
    <property type="entry name" value="GH11_2"/>
    <property type="match status" value="1"/>
</dbReference>
<dbReference type="PROSITE" id="PS51761">
    <property type="entry name" value="GH11_3"/>
    <property type="match status" value="1"/>
</dbReference>
<name>XYN_TRIHA</name>
<sequence>QTIGPGTGYSNGYYYSYWNDGHAGVTYTNGGGGSFTVNWSNSGNFVAGKGWQPGTKNKVINFSGSYNPNGNSYLSIYGWSRNPLIEYYIVENFGTYNPSTGATKLGEVTSDGSVYDIYRTQRVNQPSIIGTATFYQYWSVRRNHRSSGSVNTANHFNAWASHGLTLGTMDYQIVAVEGYFSSGSASITVS</sequence>
<accession>P48793</accession>
<keyword id="KW-0002">3D-structure</keyword>
<keyword id="KW-0119">Carbohydrate metabolism</keyword>
<keyword id="KW-0903">Direct protein sequencing</keyword>
<keyword id="KW-0326">Glycosidase</keyword>
<keyword id="KW-0378">Hydrolase</keyword>
<keyword id="KW-0624">Polysaccharide degradation</keyword>
<keyword id="KW-0858">Xylan degradation</keyword>
<organism>
    <name type="scientific">Trichoderma harzianum</name>
    <name type="common">Hypocrea lixii</name>
    <dbReference type="NCBI Taxonomy" id="5544"/>
    <lineage>
        <taxon>Eukaryota</taxon>
        <taxon>Fungi</taxon>
        <taxon>Dikarya</taxon>
        <taxon>Ascomycota</taxon>
        <taxon>Pezizomycotina</taxon>
        <taxon>Sordariomycetes</taxon>
        <taxon>Hypocreomycetidae</taxon>
        <taxon>Hypocreales</taxon>
        <taxon>Hypocreaceae</taxon>
        <taxon>Trichoderma</taxon>
    </lineage>
</organism>